<gene>
    <name evidence="1" type="primary">atpA</name>
    <name type="ordered locus">BHWA1_02193</name>
</gene>
<feature type="chain" id="PRO_1000166522" description="ATP synthase subunit alpha">
    <location>
        <begin position="1"/>
        <end position="499"/>
    </location>
</feature>
<feature type="binding site" evidence="1">
    <location>
        <begin position="169"/>
        <end position="176"/>
    </location>
    <ligand>
        <name>ATP</name>
        <dbReference type="ChEBI" id="CHEBI:30616"/>
    </ligand>
</feature>
<feature type="site" description="Required for activity" evidence="1">
    <location>
        <position position="363"/>
    </location>
</feature>
<organism>
    <name type="scientific">Brachyspira hyodysenteriae (strain ATCC 49526 / WA1)</name>
    <dbReference type="NCBI Taxonomy" id="565034"/>
    <lineage>
        <taxon>Bacteria</taxon>
        <taxon>Pseudomonadati</taxon>
        <taxon>Spirochaetota</taxon>
        <taxon>Spirochaetia</taxon>
        <taxon>Brachyspirales</taxon>
        <taxon>Brachyspiraceae</taxon>
        <taxon>Brachyspira</taxon>
    </lineage>
</organism>
<protein>
    <recommendedName>
        <fullName evidence="1">ATP synthase subunit alpha</fullName>
        <ecNumber evidence="1">7.1.2.2</ecNumber>
    </recommendedName>
    <alternativeName>
        <fullName evidence="1">ATP synthase F1 sector subunit alpha</fullName>
    </alternativeName>
    <alternativeName>
        <fullName evidence="1">F-ATPase subunit alpha</fullName>
    </alternativeName>
</protein>
<comment type="function">
    <text evidence="1">Produces ATP from ADP in the presence of a proton gradient across the membrane. The alpha chain is a regulatory subunit.</text>
</comment>
<comment type="catalytic activity">
    <reaction evidence="1">
        <text>ATP + H2O + 4 H(+)(in) = ADP + phosphate + 5 H(+)(out)</text>
        <dbReference type="Rhea" id="RHEA:57720"/>
        <dbReference type="ChEBI" id="CHEBI:15377"/>
        <dbReference type="ChEBI" id="CHEBI:15378"/>
        <dbReference type="ChEBI" id="CHEBI:30616"/>
        <dbReference type="ChEBI" id="CHEBI:43474"/>
        <dbReference type="ChEBI" id="CHEBI:456216"/>
        <dbReference type="EC" id="7.1.2.2"/>
    </reaction>
</comment>
<comment type="subunit">
    <text evidence="1">F-type ATPases have 2 components, CF(1) - the catalytic core - and CF(0) - the membrane proton channel. CF(1) has five subunits: alpha(3), beta(3), gamma(1), delta(1), epsilon(1). CF(0) has three main subunits: a(1), b(2) and c(9-12). The alpha and beta chains form an alternating ring which encloses part of the gamma chain. CF(1) is attached to CF(0) by a central stalk formed by the gamma and epsilon chains, while a peripheral stalk is formed by the delta and b chains.</text>
</comment>
<comment type="subcellular location">
    <subcellularLocation>
        <location evidence="1">Cell inner membrane</location>
        <topology evidence="1">Peripheral membrane protein</topology>
    </subcellularLocation>
</comment>
<comment type="similarity">
    <text evidence="1">Belongs to the ATPase alpha/beta chains family.</text>
</comment>
<sequence length="499" mass="54549">MNIKASEIAAVLKEEIKNYKADFTPNEVGVVVEVGDGIARIIGLPHVMANEMILFESGAVGLAFNLEEETIGAIVLGDYYGIKEGSKVSRLKRILEVPVGDALLGRVVNPLGVPIDGHGEITTDKRRVIEFPAPGIADRQAVKQPLQTGIKAIDSMTPIGRGQRQLIIGDRGTGKTSIALDAIINQKGTGVICIYVAIGQKASTVAGVVDTLRQHGALEYTIVVAATAADSAPLQYIAPYGGCAMAEYFMYEQKKDTLIIYDDLTKQANAYRQISLLLRRPPGREAFPGDVFYLHSRLLERAAKLSDELGGGSLTALPIIETQDNEVSAYIPTNVISITDGQIYLLTSLFMSGVRPAIDVGISVSRVGGNAQTKAMKKVAGTLRLDLASYRSLEAFSQLGIGLDKATLAQLDRGAKMVELLKQKQYSPIPFEEQVVVIFAATKGFLDNIEVDRVHEFEWRLLQYMRADKQNILDDIREKKDIEDMDGLYKIIEEFKSKF</sequence>
<reference key="1">
    <citation type="journal article" date="2009" name="PLoS ONE">
        <title>Genome sequence of the pathogenic intestinal spirochete Brachyspira hyodysenteriae reveals adaptations to its lifestyle in the porcine large intestine.</title>
        <authorList>
            <person name="Bellgard M.I."/>
            <person name="Wanchanthuek P."/>
            <person name="La T."/>
            <person name="Ryan K."/>
            <person name="Moolhuijzen P."/>
            <person name="Albertyn Z."/>
            <person name="Shaban B."/>
            <person name="Motro Y."/>
            <person name="Dunn D.S."/>
            <person name="Schibeci D."/>
            <person name="Hunter A."/>
            <person name="Barrero R."/>
            <person name="Phillips N.D."/>
            <person name="Hampson D.J."/>
        </authorList>
    </citation>
    <scope>NUCLEOTIDE SEQUENCE [LARGE SCALE GENOMIC DNA]</scope>
    <source>
        <strain>ATCC 49526 / WA1</strain>
    </source>
</reference>
<name>ATPA_BRAHW</name>
<evidence type="ECO:0000255" key="1">
    <source>
        <dbReference type="HAMAP-Rule" id="MF_01346"/>
    </source>
</evidence>
<accession>C0QW65</accession>
<dbReference type="EC" id="7.1.2.2" evidence="1"/>
<dbReference type="EMBL" id="CP001357">
    <property type="protein sequence ID" value="ACN84651.1"/>
    <property type="molecule type" value="Genomic_DNA"/>
</dbReference>
<dbReference type="RefSeq" id="WP_012671683.1">
    <property type="nucleotide sequence ID" value="NC_012225.1"/>
</dbReference>
<dbReference type="SMR" id="C0QW65"/>
<dbReference type="STRING" id="565034.BHWA1_02193"/>
<dbReference type="KEGG" id="bhy:BHWA1_02193"/>
<dbReference type="eggNOG" id="COG0056">
    <property type="taxonomic scope" value="Bacteria"/>
</dbReference>
<dbReference type="HOGENOM" id="CLU_010091_2_1_12"/>
<dbReference type="Proteomes" id="UP000001803">
    <property type="component" value="Chromosome"/>
</dbReference>
<dbReference type="GO" id="GO:0005886">
    <property type="term" value="C:plasma membrane"/>
    <property type="evidence" value="ECO:0007669"/>
    <property type="project" value="UniProtKB-SubCell"/>
</dbReference>
<dbReference type="GO" id="GO:0045259">
    <property type="term" value="C:proton-transporting ATP synthase complex"/>
    <property type="evidence" value="ECO:0007669"/>
    <property type="project" value="UniProtKB-KW"/>
</dbReference>
<dbReference type="GO" id="GO:0043531">
    <property type="term" value="F:ADP binding"/>
    <property type="evidence" value="ECO:0007669"/>
    <property type="project" value="TreeGrafter"/>
</dbReference>
<dbReference type="GO" id="GO:0005524">
    <property type="term" value="F:ATP binding"/>
    <property type="evidence" value="ECO:0007669"/>
    <property type="project" value="UniProtKB-UniRule"/>
</dbReference>
<dbReference type="GO" id="GO:0046933">
    <property type="term" value="F:proton-transporting ATP synthase activity, rotational mechanism"/>
    <property type="evidence" value="ECO:0007669"/>
    <property type="project" value="UniProtKB-UniRule"/>
</dbReference>
<dbReference type="CDD" id="cd18113">
    <property type="entry name" value="ATP-synt_F1_alpha_C"/>
    <property type="match status" value="1"/>
</dbReference>
<dbReference type="CDD" id="cd18116">
    <property type="entry name" value="ATP-synt_F1_alpha_N"/>
    <property type="match status" value="1"/>
</dbReference>
<dbReference type="CDD" id="cd01132">
    <property type="entry name" value="F1-ATPase_alpha_CD"/>
    <property type="match status" value="1"/>
</dbReference>
<dbReference type="FunFam" id="1.20.150.20:FF:000001">
    <property type="entry name" value="ATP synthase subunit alpha"/>
    <property type="match status" value="1"/>
</dbReference>
<dbReference type="FunFam" id="3.40.50.300:FF:000002">
    <property type="entry name" value="ATP synthase subunit alpha"/>
    <property type="match status" value="1"/>
</dbReference>
<dbReference type="Gene3D" id="2.40.30.20">
    <property type="match status" value="1"/>
</dbReference>
<dbReference type="Gene3D" id="1.20.150.20">
    <property type="entry name" value="ATP synthase alpha/beta chain, C-terminal domain"/>
    <property type="match status" value="1"/>
</dbReference>
<dbReference type="Gene3D" id="3.40.50.300">
    <property type="entry name" value="P-loop containing nucleotide triphosphate hydrolases"/>
    <property type="match status" value="1"/>
</dbReference>
<dbReference type="HAMAP" id="MF_01346">
    <property type="entry name" value="ATP_synth_alpha_bact"/>
    <property type="match status" value="1"/>
</dbReference>
<dbReference type="InterPro" id="IPR023366">
    <property type="entry name" value="ATP_synth_asu-like_sf"/>
</dbReference>
<dbReference type="InterPro" id="IPR000793">
    <property type="entry name" value="ATP_synth_asu_C"/>
</dbReference>
<dbReference type="InterPro" id="IPR038376">
    <property type="entry name" value="ATP_synth_asu_C_sf"/>
</dbReference>
<dbReference type="InterPro" id="IPR033732">
    <property type="entry name" value="ATP_synth_F1_a_nt-bd_dom"/>
</dbReference>
<dbReference type="InterPro" id="IPR005294">
    <property type="entry name" value="ATP_synth_F1_asu"/>
</dbReference>
<dbReference type="InterPro" id="IPR020003">
    <property type="entry name" value="ATPase_a/bsu_AS"/>
</dbReference>
<dbReference type="InterPro" id="IPR004100">
    <property type="entry name" value="ATPase_F1/V1/A1_a/bsu_N"/>
</dbReference>
<dbReference type="InterPro" id="IPR036121">
    <property type="entry name" value="ATPase_F1/V1/A1_a/bsu_N_sf"/>
</dbReference>
<dbReference type="InterPro" id="IPR000194">
    <property type="entry name" value="ATPase_F1/V1/A1_a/bsu_nucl-bd"/>
</dbReference>
<dbReference type="InterPro" id="IPR027417">
    <property type="entry name" value="P-loop_NTPase"/>
</dbReference>
<dbReference type="NCBIfam" id="TIGR00962">
    <property type="entry name" value="atpA"/>
    <property type="match status" value="1"/>
</dbReference>
<dbReference type="NCBIfam" id="NF009884">
    <property type="entry name" value="PRK13343.1"/>
    <property type="match status" value="1"/>
</dbReference>
<dbReference type="PANTHER" id="PTHR48082">
    <property type="entry name" value="ATP SYNTHASE SUBUNIT ALPHA, MITOCHONDRIAL"/>
    <property type="match status" value="1"/>
</dbReference>
<dbReference type="PANTHER" id="PTHR48082:SF2">
    <property type="entry name" value="ATP SYNTHASE SUBUNIT ALPHA, MITOCHONDRIAL"/>
    <property type="match status" value="1"/>
</dbReference>
<dbReference type="Pfam" id="PF00006">
    <property type="entry name" value="ATP-synt_ab"/>
    <property type="match status" value="1"/>
</dbReference>
<dbReference type="Pfam" id="PF00306">
    <property type="entry name" value="ATP-synt_ab_C"/>
    <property type="match status" value="1"/>
</dbReference>
<dbReference type="Pfam" id="PF02874">
    <property type="entry name" value="ATP-synt_ab_N"/>
    <property type="match status" value="1"/>
</dbReference>
<dbReference type="PIRSF" id="PIRSF039088">
    <property type="entry name" value="F_ATPase_subunit_alpha"/>
    <property type="match status" value="1"/>
</dbReference>
<dbReference type="SUPFAM" id="SSF47917">
    <property type="entry name" value="C-terminal domain of alpha and beta subunits of F1 ATP synthase"/>
    <property type="match status" value="1"/>
</dbReference>
<dbReference type="SUPFAM" id="SSF50615">
    <property type="entry name" value="N-terminal domain of alpha and beta subunits of F1 ATP synthase"/>
    <property type="match status" value="1"/>
</dbReference>
<dbReference type="SUPFAM" id="SSF52540">
    <property type="entry name" value="P-loop containing nucleoside triphosphate hydrolases"/>
    <property type="match status" value="1"/>
</dbReference>
<dbReference type="PROSITE" id="PS00152">
    <property type="entry name" value="ATPASE_ALPHA_BETA"/>
    <property type="match status" value="1"/>
</dbReference>
<keyword id="KW-0066">ATP synthesis</keyword>
<keyword id="KW-0067">ATP-binding</keyword>
<keyword id="KW-0997">Cell inner membrane</keyword>
<keyword id="KW-1003">Cell membrane</keyword>
<keyword id="KW-0139">CF(1)</keyword>
<keyword id="KW-0375">Hydrogen ion transport</keyword>
<keyword id="KW-0406">Ion transport</keyword>
<keyword id="KW-0472">Membrane</keyword>
<keyword id="KW-0547">Nucleotide-binding</keyword>
<keyword id="KW-1278">Translocase</keyword>
<keyword id="KW-0813">Transport</keyword>
<proteinExistence type="inferred from homology"/>